<proteinExistence type="evidence at transcript level"/>
<feature type="chain" id="PRO_0000212853" description="Poly(A)-specific ribonuclease PARN">
    <location>
        <begin position="1"/>
        <end position="639"/>
    </location>
</feature>
<feature type="domain" description="R3H" evidence="3">
    <location>
        <begin position="178"/>
        <end position="245"/>
    </location>
</feature>
<feature type="region of interest" description="Disordered" evidence="4">
    <location>
        <begin position="563"/>
        <end position="611"/>
    </location>
</feature>
<feature type="binding site" evidence="1">
    <location>
        <position position="28"/>
    </location>
    <ligand>
        <name>a divalent metal cation</name>
        <dbReference type="ChEBI" id="CHEBI:60240"/>
        <note>catalytic</note>
    </ligand>
</feature>
<feature type="binding site" evidence="1">
    <location>
        <position position="30"/>
    </location>
    <ligand>
        <name>a divalent metal cation</name>
        <dbReference type="ChEBI" id="CHEBI:60240"/>
        <note>catalytic</note>
    </ligand>
</feature>
<feature type="binding site" evidence="1">
    <location>
        <position position="292"/>
    </location>
    <ligand>
        <name>a divalent metal cation</name>
        <dbReference type="ChEBI" id="CHEBI:60240"/>
        <note>catalytic</note>
    </ligand>
</feature>
<feature type="binding site" evidence="1">
    <location>
        <position position="382"/>
    </location>
    <ligand>
        <name>a divalent metal cation</name>
        <dbReference type="ChEBI" id="CHEBI:60240"/>
        <note>catalytic</note>
    </ligand>
</feature>
<feature type="site" description="Interaction with poly(A)" evidence="1">
    <location>
        <position position="326"/>
    </location>
</feature>
<feature type="modified residue" description="Phosphoserine" evidence="1">
    <location>
        <position position="163"/>
    </location>
</feature>
<feature type="modified residue" description="Phosphoserine" evidence="1">
    <location>
        <position position="167"/>
    </location>
</feature>
<feature type="modified residue" description="N6-acetyllysine" evidence="1">
    <location>
        <position position="220"/>
    </location>
</feature>
<feature type="modified residue" description="N6-acetyllysine" evidence="1">
    <location>
        <position position="499"/>
    </location>
</feature>
<feature type="modified residue" description="Phosphoserine" evidence="1">
    <location>
        <position position="530"/>
    </location>
</feature>
<feature type="modified residue" description="Phosphoserine; by MAPKAPK2" evidence="1">
    <location>
        <position position="557"/>
    </location>
</feature>
<feature type="modified residue" description="Phosphoserine" evidence="2">
    <location>
        <position position="583"/>
    </location>
</feature>
<feature type="modified residue" description="Phosphoserine" evidence="2">
    <location>
        <position position="587"/>
    </location>
</feature>
<feature type="modified residue" description="Phosphoserine" evidence="1">
    <location>
        <position position="619"/>
    </location>
</feature>
<feature type="modified residue" description="Phosphoserine" evidence="1">
    <location>
        <position position="623"/>
    </location>
</feature>
<feature type="modified residue" description="Phosphoserine" evidence="1">
    <location>
        <position position="628"/>
    </location>
</feature>
<feature type="modified residue" description="Phosphothreonine" evidence="1">
    <location>
        <position position="631"/>
    </location>
</feature>
<accession>Q5RC51</accession>
<name>PARN_PONAB</name>
<evidence type="ECO:0000250" key="1">
    <source>
        <dbReference type="UniProtKB" id="O95453"/>
    </source>
</evidence>
<evidence type="ECO:0000250" key="2">
    <source>
        <dbReference type="UniProtKB" id="Q8VDG3"/>
    </source>
</evidence>
<evidence type="ECO:0000255" key="3">
    <source>
        <dbReference type="PROSITE-ProRule" id="PRU00382"/>
    </source>
</evidence>
<evidence type="ECO:0000256" key="4">
    <source>
        <dbReference type="SAM" id="MobiDB-lite"/>
    </source>
</evidence>
<evidence type="ECO:0000305" key="5"/>
<protein>
    <recommendedName>
        <fullName>Poly(A)-specific ribonuclease PARN</fullName>
        <ecNumber>3.1.13.4</ecNumber>
    </recommendedName>
    <alternativeName>
        <fullName>Polyadenylate-specific ribonuclease</fullName>
    </alternativeName>
</protein>
<gene>
    <name type="primary">PARN</name>
</gene>
<comment type="function">
    <text evidence="1">3'-exoribonuclease that has a preference for poly(A) tails of mRNAs, thereby efficiently degrading poly(A) tails. Exonucleolytic degradation of the poly(A) tail is often the first step in the decay of eukaryotic mRNAs and is also used to silence certain maternal mRNAs translationally during oocyte maturation and early embryonic development. Interacts with both the 3'-end poly(A) tail and the 5'-end cap structure during degradation, the interaction with the cap structure being required for an efficient degradation of poly(A) tails. Involved in nonsense-mediated mRNA decay, a critical process of selective degradation of mRNAs that contain premature stop codons. Also involved in degradation of inherently unstable mRNAs that contain AU-rich elements (AREs) in their 3'-UTR, possibly via its interaction with KHSRP. Probably mediates the removal of poly(A) tails of AREs mRNAs, which constitutes the first step of destabilization (By similarity). Also able to recognize poly(A) tails of microRNAs such as MIR21 and H/ACA box snoRNAs (small nucleolar RNAs) leading to microRNAs degradation or snoRNA increased stability (By similarity).</text>
</comment>
<comment type="catalytic activity">
    <reaction>
        <text>Exonucleolytic cleavage of poly(A) to 5'-AMP.</text>
        <dbReference type="EC" id="3.1.13.4"/>
    </reaction>
</comment>
<comment type="cofactor">
    <cofactor evidence="1">
        <name>Mg(2+)</name>
        <dbReference type="ChEBI" id="CHEBI:18420"/>
    </cofactor>
    <text evidence="1">Divalent metal cations. Mg(2+) is the most probable.</text>
</comment>
<comment type="subunit">
    <text evidence="1">Homodimer. Found in a mRNA decay complex with RENT1, RENT2 and RENT3B. Interacts with KHSRP. Interacts with CELF1/CUGBP1. Interacts with ZC3HAV1 in an RNA-independent manner. Interacts with DHX36.</text>
</comment>
<comment type="subcellular location">
    <subcellularLocation>
        <location evidence="1">Nucleus</location>
    </subcellularLocation>
    <subcellularLocation>
        <location evidence="1">Cytoplasm</location>
    </subcellularLocation>
    <subcellularLocation>
        <location evidence="1">Nucleus</location>
        <location evidence="1">Nucleolus</location>
    </subcellularLocation>
    <text evidence="1">Some nuclear fraction is nucleolar.</text>
</comment>
<comment type="PTM">
    <text evidence="1">Phosphorylation by MAPKAPK2, preventing GADD45A mRNA degradation after genotoxic stress.</text>
</comment>
<comment type="similarity">
    <text evidence="5">Belongs to the CAF1 family.</text>
</comment>
<organism>
    <name type="scientific">Pongo abelii</name>
    <name type="common">Sumatran orangutan</name>
    <name type="synonym">Pongo pygmaeus abelii</name>
    <dbReference type="NCBI Taxonomy" id="9601"/>
    <lineage>
        <taxon>Eukaryota</taxon>
        <taxon>Metazoa</taxon>
        <taxon>Chordata</taxon>
        <taxon>Craniata</taxon>
        <taxon>Vertebrata</taxon>
        <taxon>Euteleostomi</taxon>
        <taxon>Mammalia</taxon>
        <taxon>Eutheria</taxon>
        <taxon>Euarchontoglires</taxon>
        <taxon>Primates</taxon>
        <taxon>Haplorrhini</taxon>
        <taxon>Catarrhini</taxon>
        <taxon>Hominidae</taxon>
        <taxon>Pongo</taxon>
    </lineage>
</organism>
<reference key="1">
    <citation type="submission" date="2004-11" db="EMBL/GenBank/DDBJ databases">
        <authorList>
            <consortium name="The German cDNA consortium"/>
        </authorList>
    </citation>
    <scope>NUCLEOTIDE SEQUENCE [LARGE SCALE MRNA]</scope>
    <source>
        <tissue>Kidney</tissue>
    </source>
</reference>
<dbReference type="EC" id="3.1.13.4"/>
<dbReference type="EMBL" id="CR858430">
    <property type="protein sequence ID" value="CAH90659.1"/>
    <property type="molecule type" value="mRNA"/>
</dbReference>
<dbReference type="RefSeq" id="NP_001125357.1">
    <property type="nucleotide sequence ID" value="NM_001131885.1"/>
</dbReference>
<dbReference type="SMR" id="Q5RC51"/>
<dbReference type="FunCoup" id="Q5RC51">
    <property type="interactions" value="4082"/>
</dbReference>
<dbReference type="STRING" id="9601.ENSPPYP00000008052"/>
<dbReference type="GeneID" id="100172259"/>
<dbReference type="KEGG" id="pon:100172259"/>
<dbReference type="CTD" id="5073"/>
<dbReference type="eggNOG" id="KOG1990">
    <property type="taxonomic scope" value="Eukaryota"/>
</dbReference>
<dbReference type="InParanoid" id="Q5RC51"/>
<dbReference type="OrthoDB" id="1432093at2759"/>
<dbReference type="Proteomes" id="UP000001595">
    <property type="component" value="Unplaced"/>
</dbReference>
<dbReference type="GO" id="GO:0005737">
    <property type="term" value="C:cytoplasm"/>
    <property type="evidence" value="ECO:0007669"/>
    <property type="project" value="UniProtKB-SubCell"/>
</dbReference>
<dbReference type="GO" id="GO:0005730">
    <property type="term" value="C:nucleolus"/>
    <property type="evidence" value="ECO:0007669"/>
    <property type="project" value="UniProtKB-SubCell"/>
</dbReference>
<dbReference type="GO" id="GO:0043169">
    <property type="term" value="F:cation binding"/>
    <property type="evidence" value="ECO:0000250"/>
    <property type="project" value="UniProtKB"/>
</dbReference>
<dbReference type="GO" id="GO:0046872">
    <property type="term" value="F:metal ion binding"/>
    <property type="evidence" value="ECO:0007669"/>
    <property type="project" value="UniProtKB-KW"/>
</dbReference>
<dbReference type="GO" id="GO:0004535">
    <property type="term" value="F:poly(A)-specific ribonuclease activity"/>
    <property type="evidence" value="ECO:0000250"/>
    <property type="project" value="UniProtKB"/>
</dbReference>
<dbReference type="GO" id="GO:0003723">
    <property type="term" value="F:RNA binding"/>
    <property type="evidence" value="ECO:0000250"/>
    <property type="project" value="UniProtKB"/>
</dbReference>
<dbReference type="GO" id="GO:0000495">
    <property type="term" value="P:box H/ACA sno(s)RNA 3'-end processing"/>
    <property type="evidence" value="ECO:0000250"/>
    <property type="project" value="UniProtKB"/>
</dbReference>
<dbReference type="GO" id="GO:0010587">
    <property type="term" value="P:miRNA catabolic process"/>
    <property type="evidence" value="ECO:0000250"/>
    <property type="project" value="UniProtKB"/>
</dbReference>
<dbReference type="GO" id="GO:0000184">
    <property type="term" value="P:nuclear-transcribed mRNA catabolic process, nonsense-mediated decay"/>
    <property type="evidence" value="ECO:0007669"/>
    <property type="project" value="UniProtKB-KW"/>
</dbReference>
<dbReference type="GO" id="GO:0000289">
    <property type="term" value="P:nuclear-transcribed mRNA poly(A) tail shortening"/>
    <property type="evidence" value="ECO:0007669"/>
    <property type="project" value="TreeGrafter"/>
</dbReference>
<dbReference type="GO" id="GO:0071051">
    <property type="term" value="P:poly(A)-dependent snoRNA 3'-end processing"/>
    <property type="evidence" value="ECO:0000250"/>
    <property type="project" value="UniProtKB"/>
</dbReference>
<dbReference type="GO" id="GO:1990431">
    <property type="term" value="P:priRNA 3'-end processing"/>
    <property type="evidence" value="ECO:0007669"/>
    <property type="project" value="TreeGrafter"/>
</dbReference>
<dbReference type="GO" id="GO:1990432">
    <property type="term" value="P:siRNA 3'-end processing"/>
    <property type="evidence" value="ECO:0007669"/>
    <property type="project" value="TreeGrafter"/>
</dbReference>
<dbReference type="CDD" id="cd02637">
    <property type="entry name" value="R3H_PARN"/>
    <property type="match status" value="1"/>
</dbReference>
<dbReference type="CDD" id="cd12428">
    <property type="entry name" value="RRM_PARN"/>
    <property type="match status" value="1"/>
</dbReference>
<dbReference type="FunFam" id="3.30.1370.50:FF:000014">
    <property type="entry name" value="Poly(A)-specific ribonuclease PARN"/>
    <property type="match status" value="1"/>
</dbReference>
<dbReference type="FunFam" id="3.30.420.10:FF:000035">
    <property type="entry name" value="Poly(A)-specific ribonuclease PARN"/>
    <property type="match status" value="1"/>
</dbReference>
<dbReference type="FunFam" id="3.30.70.330:FF:000196">
    <property type="entry name" value="Poly(A)-specific ribonuclease PARN"/>
    <property type="match status" value="1"/>
</dbReference>
<dbReference type="FunFam" id="3.30.420.10:FF:000042">
    <property type="entry name" value="poly(A)-specific ribonuclease PARN"/>
    <property type="match status" value="1"/>
</dbReference>
<dbReference type="Gene3D" id="3.30.70.330">
    <property type="match status" value="1"/>
</dbReference>
<dbReference type="Gene3D" id="3.30.420.10">
    <property type="entry name" value="Ribonuclease H-like superfamily/Ribonuclease H"/>
    <property type="match status" value="2"/>
</dbReference>
<dbReference type="InterPro" id="IPR051181">
    <property type="entry name" value="CAF1_poly(A)_ribonucleases"/>
</dbReference>
<dbReference type="InterPro" id="IPR012677">
    <property type="entry name" value="Nucleotide-bd_a/b_plait_sf"/>
</dbReference>
<dbReference type="InterPro" id="IPR034042">
    <property type="entry name" value="PARN_R3H"/>
</dbReference>
<dbReference type="InterPro" id="IPR014789">
    <property type="entry name" value="PolyA-riboNase_RNA-binding"/>
</dbReference>
<dbReference type="InterPro" id="IPR001374">
    <property type="entry name" value="R3H_dom"/>
</dbReference>
<dbReference type="InterPro" id="IPR036867">
    <property type="entry name" value="R3H_dom_sf"/>
</dbReference>
<dbReference type="InterPro" id="IPR035979">
    <property type="entry name" value="RBD_domain_sf"/>
</dbReference>
<dbReference type="InterPro" id="IPR006941">
    <property type="entry name" value="RNase_CAF1"/>
</dbReference>
<dbReference type="InterPro" id="IPR012337">
    <property type="entry name" value="RNaseH-like_sf"/>
</dbReference>
<dbReference type="InterPro" id="IPR036397">
    <property type="entry name" value="RNaseH_sf"/>
</dbReference>
<dbReference type="PANTHER" id="PTHR15092">
    <property type="entry name" value="POLY A -SPECIFIC RIBONUCLEASE/TARGET OF EGR1, MEMBER 1"/>
    <property type="match status" value="1"/>
</dbReference>
<dbReference type="PANTHER" id="PTHR15092:SF44">
    <property type="entry name" value="POLY(A)-SPECIFIC RIBONUCLEASE PARN"/>
    <property type="match status" value="1"/>
</dbReference>
<dbReference type="Pfam" id="PF04857">
    <property type="entry name" value="CAF1"/>
    <property type="match status" value="1"/>
</dbReference>
<dbReference type="Pfam" id="PF08675">
    <property type="entry name" value="RNA_bind"/>
    <property type="match status" value="1"/>
</dbReference>
<dbReference type="SUPFAM" id="SSF82708">
    <property type="entry name" value="R3H domain"/>
    <property type="match status" value="1"/>
</dbReference>
<dbReference type="SUPFAM" id="SSF53098">
    <property type="entry name" value="Ribonuclease H-like"/>
    <property type="match status" value="1"/>
</dbReference>
<dbReference type="SUPFAM" id="SSF54928">
    <property type="entry name" value="RNA-binding domain, RBD"/>
    <property type="match status" value="1"/>
</dbReference>
<dbReference type="PROSITE" id="PS51061">
    <property type="entry name" value="R3H"/>
    <property type="match status" value="1"/>
</dbReference>
<keyword id="KW-0007">Acetylation</keyword>
<keyword id="KW-0963">Cytoplasm</keyword>
<keyword id="KW-0269">Exonuclease</keyword>
<keyword id="KW-0378">Hydrolase</keyword>
<keyword id="KW-0460">Magnesium</keyword>
<keyword id="KW-0479">Metal-binding</keyword>
<keyword id="KW-0866">Nonsense-mediated mRNA decay</keyword>
<keyword id="KW-0540">Nuclease</keyword>
<keyword id="KW-0539">Nucleus</keyword>
<keyword id="KW-0597">Phosphoprotein</keyword>
<keyword id="KW-1185">Reference proteome</keyword>
<keyword id="KW-0694">RNA-binding</keyword>
<sequence length="639" mass="73430">MEIIRSNFKCNLHKVYQAIEEADFFAIDGEFSGISDGPSVSALTNGFDTPEERYQKLKKHSMDFLLFQFGLCTFKYDYTDSKYITKSFNFYVFPKPFNRSPPDVKFVCQSSSIDFLASQGFDFNKVFRNGIPYLNQEEERQLREQYDEKRSQANGAGALSYVSPNTSKCPVTIPEDQKKFIDQVVEKIEDLLQSEENKNLDLEPCTGFQRKLIYQTLSWKYPKGIHVETLETEKKERYIVISKVDEEERKRREQQKHAKEQEELNDAVGFSRVIHAIANSGKLVIGHNMLLDVMHTVHQFYCPLPADLSEFKEMTTCVFPRLLDTKLMASTQPFKDIINNTSLAELEKRLKETPFSPPKVESAEGFPSYDTASEQLHEAGYDAYITGLCFISMANYLGSFLSPPKIHVSARSKLIEPFFNKLFLMRVMDIPYLNLEGPDLQPKRDHVLHVTFPKEWKTSDLYQLFSAFGNIQISWIDDTSAFVSLSQPEQVKIAVNTSKYAESYRIQTYAEYVGRKQEEKQIKRKWTEDSWKEADSKRLNPQCIPYALQNHYYRNNSFTAPSTVGKRNLSPSQEEAGLEDGVSGEISDTELEQTDSCAEPLSEGRKKAKKLKRMKKELSPAVSISKNSPATLFEVPDTW</sequence>